<protein>
    <recommendedName>
        <fullName evidence="1">Aspartate--tRNA(Asp/Asn) ligase</fullName>
        <ecNumber evidence="1">6.1.1.23</ecNumber>
    </recommendedName>
    <alternativeName>
        <fullName evidence="1">Aspartyl-tRNA synthetase</fullName>
        <shortName evidence="1">AspRS</shortName>
    </alternativeName>
    <alternativeName>
        <fullName evidence="1">Non-discriminating aspartyl-tRNA synthetase</fullName>
        <shortName evidence="1">ND-AspRS</shortName>
    </alternativeName>
</protein>
<feature type="chain" id="PRO_0000235576" description="Aspartate--tRNA(Asp/Asn) ligase">
    <location>
        <begin position="1"/>
        <end position="580"/>
    </location>
</feature>
<feature type="region of interest" description="Aspartate" evidence="1">
    <location>
        <begin position="197"/>
        <end position="200"/>
    </location>
</feature>
<feature type="binding site" evidence="1">
    <location>
        <position position="173"/>
    </location>
    <ligand>
        <name>L-aspartate</name>
        <dbReference type="ChEBI" id="CHEBI:29991"/>
    </ligand>
</feature>
<feature type="binding site" evidence="1">
    <location>
        <begin position="219"/>
        <end position="221"/>
    </location>
    <ligand>
        <name>ATP</name>
        <dbReference type="ChEBI" id="CHEBI:30616"/>
    </ligand>
</feature>
<feature type="binding site" evidence="1">
    <location>
        <position position="219"/>
    </location>
    <ligand>
        <name>L-aspartate</name>
        <dbReference type="ChEBI" id="CHEBI:29991"/>
    </ligand>
</feature>
<feature type="binding site" evidence="1">
    <location>
        <position position="228"/>
    </location>
    <ligand>
        <name>ATP</name>
        <dbReference type="ChEBI" id="CHEBI:30616"/>
    </ligand>
</feature>
<feature type="binding site" evidence="1">
    <location>
        <position position="448"/>
    </location>
    <ligand>
        <name>L-aspartate</name>
        <dbReference type="ChEBI" id="CHEBI:29991"/>
    </ligand>
</feature>
<feature type="binding site" evidence="1">
    <location>
        <position position="478"/>
    </location>
    <ligand>
        <name>ATP</name>
        <dbReference type="ChEBI" id="CHEBI:30616"/>
    </ligand>
</feature>
<feature type="binding site" evidence="1">
    <location>
        <position position="485"/>
    </location>
    <ligand>
        <name>L-aspartate</name>
        <dbReference type="ChEBI" id="CHEBI:29991"/>
    </ligand>
</feature>
<feature type="binding site" evidence="1">
    <location>
        <begin position="530"/>
        <end position="533"/>
    </location>
    <ligand>
        <name>ATP</name>
        <dbReference type="ChEBI" id="CHEBI:30616"/>
    </ligand>
</feature>
<feature type="site" description="Important for tRNA non-discrimination" evidence="1">
    <location>
        <position position="30"/>
    </location>
</feature>
<feature type="site" description="Important for tRNA non-discrimination" evidence="1">
    <location>
        <position position="82"/>
    </location>
</feature>
<gene>
    <name evidence="1" type="primary">aspS</name>
    <name type="ordered locus">Suden_1086</name>
</gene>
<accession>Q30RL7</accession>
<keyword id="KW-0030">Aminoacyl-tRNA synthetase</keyword>
<keyword id="KW-0067">ATP-binding</keyword>
<keyword id="KW-0963">Cytoplasm</keyword>
<keyword id="KW-0436">Ligase</keyword>
<keyword id="KW-0547">Nucleotide-binding</keyword>
<keyword id="KW-0648">Protein biosynthesis</keyword>
<keyword id="KW-1185">Reference proteome</keyword>
<reference key="1">
    <citation type="journal article" date="2008" name="Appl. Environ. Microbiol.">
        <title>Genome of the epsilonproteobacterial chemolithoautotroph Sulfurimonas denitrificans.</title>
        <authorList>
            <person name="Sievert S.M."/>
            <person name="Scott K.M."/>
            <person name="Klotz M.G."/>
            <person name="Chain P.S.G."/>
            <person name="Hauser L.J."/>
            <person name="Hemp J."/>
            <person name="Huegler M."/>
            <person name="Land M."/>
            <person name="Lapidus A."/>
            <person name="Larimer F.W."/>
            <person name="Lucas S."/>
            <person name="Malfatti S.A."/>
            <person name="Meyer F."/>
            <person name="Paulsen I.T."/>
            <person name="Ren Q."/>
            <person name="Simon J."/>
            <person name="Bailey K."/>
            <person name="Diaz E."/>
            <person name="Fitzpatrick K.A."/>
            <person name="Glover B."/>
            <person name="Gwatney N."/>
            <person name="Korajkic A."/>
            <person name="Long A."/>
            <person name="Mobberley J.M."/>
            <person name="Pantry S.N."/>
            <person name="Pazder G."/>
            <person name="Peterson S."/>
            <person name="Quintanilla J.D."/>
            <person name="Sprinkle R."/>
            <person name="Stephens J."/>
            <person name="Thomas P."/>
            <person name="Vaughn R."/>
            <person name="Weber M.J."/>
            <person name="Wooten L.L."/>
        </authorList>
    </citation>
    <scope>NUCLEOTIDE SEQUENCE [LARGE SCALE GENOMIC DNA]</scope>
    <source>
        <strain>ATCC 33889 / DSM 1251</strain>
    </source>
</reference>
<evidence type="ECO:0000255" key="1">
    <source>
        <dbReference type="HAMAP-Rule" id="MF_00044"/>
    </source>
</evidence>
<comment type="function">
    <text evidence="1">Aspartyl-tRNA synthetase with relaxed tRNA specificity since it is able to aspartylate not only its cognate tRNA(Asp) but also tRNA(Asn). Reaction proceeds in two steps: L-aspartate is first activated by ATP to form Asp-AMP and then transferred to the acceptor end of tRNA(Asp/Asn).</text>
</comment>
<comment type="catalytic activity">
    <reaction evidence="1">
        <text>tRNA(Asx) + L-aspartate + ATP = L-aspartyl-tRNA(Asx) + AMP + diphosphate</text>
        <dbReference type="Rhea" id="RHEA:18349"/>
        <dbReference type="Rhea" id="RHEA-COMP:9710"/>
        <dbReference type="Rhea" id="RHEA-COMP:9711"/>
        <dbReference type="ChEBI" id="CHEBI:29991"/>
        <dbReference type="ChEBI" id="CHEBI:30616"/>
        <dbReference type="ChEBI" id="CHEBI:33019"/>
        <dbReference type="ChEBI" id="CHEBI:78442"/>
        <dbReference type="ChEBI" id="CHEBI:78516"/>
        <dbReference type="ChEBI" id="CHEBI:456215"/>
        <dbReference type="EC" id="6.1.1.23"/>
    </reaction>
</comment>
<comment type="subunit">
    <text evidence="1">Homodimer.</text>
</comment>
<comment type="subcellular location">
    <subcellularLocation>
        <location evidence="1">Cytoplasm</location>
    </subcellularLocation>
</comment>
<comment type="similarity">
    <text evidence="1">Belongs to the class-II aminoacyl-tRNA synthetase family. Type 1 subfamily.</text>
</comment>
<dbReference type="EC" id="6.1.1.23" evidence="1"/>
<dbReference type="EMBL" id="CP000153">
    <property type="protein sequence ID" value="ABB44364.1"/>
    <property type="molecule type" value="Genomic_DNA"/>
</dbReference>
<dbReference type="RefSeq" id="WP_011372716.1">
    <property type="nucleotide sequence ID" value="NC_007575.1"/>
</dbReference>
<dbReference type="SMR" id="Q30RL7"/>
<dbReference type="STRING" id="326298.Suden_1086"/>
<dbReference type="KEGG" id="tdn:Suden_1086"/>
<dbReference type="eggNOG" id="COG0173">
    <property type="taxonomic scope" value="Bacteria"/>
</dbReference>
<dbReference type="HOGENOM" id="CLU_014330_3_2_7"/>
<dbReference type="OrthoDB" id="9802326at2"/>
<dbReference type="Proteomes" id="UP000002714">
    <property type="component" value="Chromosome"/>
</dbReference>
<dbReference type="GO" id="GO:0005737">
    <property type="term" value="C:cytoplasm"/>
    <property type="evidence" value="ECO:0007669"/>
    <property type="project" value="UniProtKB-SubCell"/>
</dbReference>
<dbReference type="GO" id="GO:0004815">
    <property type="term" value="F:aspartate-tRNA ligase activity"/>
    <property type="evidence" value="ECO:0007669"/>
    <property type="project" value="UniProtKB-UniRule"/>
</dbReference>
<dbReference type="GO" id="GO:0050560">
    <property type="term" value="F:aspartate-tRNA(Asn) ligase activity"/>
    <property type="evidence" value="ECO:0007669"/>
    <property type="project" value="UniProtKB-EC"/>
</dbReference>
<dbReference type="GO" id="GO:0005524">
    <property type="term" value="F:ATP binding"/>
    <property type="evidence" value="ECO:0007669"/>
    <property type="project" value="UniProtKB-UniRule"/>
</dbReference>
<dbReference type="GO" id="GO:0003676">
    <property type="term" value="F:nucleic acid binding"/>
    <property type="evidence" value="ECO:0007669"/>
    <property type="project" value="InterPro"/>
</dbReference>
<dbReference type="GO" id="GO:0006422">
    <property type="term" value="P:aspartyl-tRNA aminoacylation"/>
    <property type="evidence" value="ECO:0007669"/>
    <property type="project" value="UniProtKB-UniRule"/>
</dbReference>
<dbReference type="CDD" id="cd00777">
    <property type="entry name" value="AspRS_core"/>
    <property type="match status" value="1"/>
</dbReference>
<dbReference type="CDD" id="cd04317">
    <property type="entry name" value="EcAspRS_like_N"/>
    <property type="match status" value="1"/>
</dbReference>
<dbReference type="Gene3D" id="3.30.930.10">
    <property type="entry name" value="Bira Bifunctional Protein, Domain 2"/>
    <property type="match status" value="1"/>
</dbReference>
<dbReference type="Gene3D" id="3.30.1360.30">
    <property type="entry name" value="GAD-like domain"/>
    <property type="match status" value="1"/>
</dbReference>
<dbReference type="Gene3D" id="2.40.50.140">
    <property type="entry name" value="Nucleic acid-binding proteins"/>
    <property type="match status" value="1"/>
</dbReference>
<dbReference type="HAMAP" id="MF_00044">
    <property type="entry name" value="Asp_tRNA_synth_type1"/>
    <property type="match status" value="1"/>
</dbReference>
<dbReference type="InterPro" id="IPR004364">
    <property type="entry name" value="Aa-tRNA-synt_II"/>
</dbReference>
<dbReference type="InterPro" id="IPR006195">
    <property type="entry name" value="aa-tRNA-synth_II"/>
</dbReference>
<dbReference type="InterPro" id="IPR045864">
    <property type="entry name" value="aa-tRNA-synth_II/BPL/LPL"/>
</dbReference>
<dbReference type="InterPro" id="IPR004524">
    <property type="entry name" value="Asp-tRNA-ligase_1"/>
</dbReference>
<dbReference type="InterPro" id="IPR047089">
    <property type="entry name" value="Asp-tRNA-ligase_1_N"/>
</dbReference>
<dbReference type="InterPro" id="IPR002312">
    <property type="entry name" value="Asp/Asn-tRNA-synth_IIb"/>
</dbReference>
<dbReference type="InterPro" id="IPR047090">
    <property type="entry name" value="AspRS_core"/>
</dbReference>
<dbReference type="InterPro" id="IPR004115">
    <property type="entry name" value="GAD-like_sf"/>
</dbReference>
<dbReference type="InterPro" id="IPR029351">
    <property type="entry name" value="GAD_dom"/>
</dbReference>
<dbReference type="InterPro" id="IPR012340">
    <property type="entry name" value="NA-bd_OB-fold"/>
</dbReference>
<dbReference type="InterPro" id="IPR004365">
    <property type="entry name" value="NA-bd_OB_tRNA"/>
</dbReference>
<dbReference type="NCBIfam" id="TIGR00459">
    <property type="entry name" value="aspS_bact"/>
    <property type="match status" value="1"/>
</dbReference>
<dbReference type="NCBIfam" id="NF001750">
    <property type="entry name" value="PRK00476.1"/>
    <property type="match status" value="1"/>
</dbReference>
<dbReference type="PANTHER" id="PTHR22594:SF5">
    <property type="entry name" value="ASPARTATE--TRNA LIGASE, MITOCHONDRIAL"/>
    <property type="match status" value="1"/>
</dbReference>
<dbReference type="PANTHER" id="PTHR22594">
    <property type="entry name" value="ASPARTYL/LYSYL-TRNA SYNTHETASE"/>
    <property type="match status" value="1"/>
</dbReference>
<dbReference type="Pfam" id="PF02938">
    <property type="entry name" value="GAD"/>
    <property type="match status" value="1"/>
</dbReference>
<dbReference type="Pfam" id="PF00152">
    <property type="entry name" value="tRNA-synt_2"/>
    <property type="match status" value="1"/>
</dbReference>
<dbReference type="Pfam" id="PF01336">
    <property type="entry name" value="tRNA_anti-codon"/>
    <property type="match status" value="1"/>
</dbReference>
<dbReference type="PRINTS" id="PR01042">
    <property type="entry name" value="TRNASYNTHASP"/>
</dbReference>
<dbReference type="SUPFAM" id="SSF55681">
    <property type="entry name" value="Class II aaRS and biotin synthetases"/>
    <property type="match status" value="1"/>
</dbReference>
<dbReference type="SUPFAM" id="SSF55261">
    <property type="entry name" value="GAD domain-like"/>
    <property type="match status" value="1"/>
</dbReference>
<dbReference type="SUPFAM" id="SSF50249">
    <property type="entry name" value="Nucleic acid-binding proteins"/>
    <property type="match status" value="1"/>
</dbReference>
<dbReference type="PROSITE" id="PS50862">
    <property type="entry name" value="AA_TRNA_LIGASE_II"/>
    <property type="match status" value="1"/>
</dbReference>
<organism>
    <name type="scientific">Sulfurimonas denitrificans (strain ATCC 33889 / DSM 1251)</name>
    <name type="common">Thiomicrospira denitrificans (strain ATCC 33889 / DSM 1251)</name>
    <dbReference type="NCBI Taxonomy" id="326298"/>
    <lineage>
        <taxon>Bacteria</taxon>
        <taxon>Pseudomonadati</taxon>
        <taxon>Campylobacterota</taxon>
        <taxon>Epsilonproteobacteria</taxon>
        <taxon>Campylobacterales</taxon>
        <taxon>Sulfurimonadaceae</taxon>
        <taxon>Sulfurimonas</taxon>
    </lineage>
</organism>
<name>SYDND_SULDN</name>
<proteinExistence type="inferred from homology"/>
<sequence length="580" mass="65842">MRSHYCTELSEANIGQEVVLAGWANSYRDHGGIIFIDLRDKSGLIQLTCDPEDSASSHKIASSIRDEFVLVAKGKVRLRGEGLTNPRLKTGAIEIVVSELTIENRSAAVPFVIGDKNVGEETRLKYRYLELRDPSMYETFRLRSKAAIAARNILDENGFLEVETPILTKSTPEGARDYLVPSRVHSGEFYALPQSPQLFKQLLMVGGFDRYFQIAKCFRDEDLRADRQPEFTQIDVEMSFCNQEDVMLIAEKLLVSMFGACGVEIKPPFNRIAYRDAMEWYGSDKPDLRYDLKMVDVIDIFERCDNEIFTNIAKQPHKNRIKALRVPGADLVFSKREMKTFEDFVRQFGAQGLGYFQMKEDGLKGPLIKFFSDADIALLVDRLGMKVGDVVFFGAGDKKTVWDYMGRLRIFIAEHERMNLADKDAFEFVWVVDFPMFEVEDGRVKALHHPFTQPKDTDKDDIEEIDSIAYDIVLNGTELGGGSIRIHKEEMQEEIFKLLGIGEEEAKEKFGFLLDALKFGAPPHGGFAIGFDRLMMLISKKSSIRDVIAFPKTQKASCILTKAPSEVDATQLRDLHIKLR</sequence>